<protein>
    <recommendedName>
        <fullName evidence="3">Transcription factor STKL1</fullName>
    </recommendedName>
    <alternativeName>
        <fullName evidence="3">Protein Storekeeper-like 1</fullName>
    </alternativeName>
</protein>
<accession>Q8LG05</accession>
<organism evidence="6">
    <name type="scientific">Arabidopsis thaliana</name>
    <name type="common">Mouse-ear cress</name>
    <dbReference type="NCBI Taxonomy" id="3702"/>
    <lineage>
        <taxon>Eukaryota</taxon>
        <taxon>Viridiplantae</taxon>
        <taxon>Streptophyta</taxon>
        <taxon>Embryophyta</taxon>
        <taxon>Tracheophyta</taxon>
        <taxon>Spermatophyta</taxon>
        <taxon>Magnoliopsida</taxon>
        <taxon>eudicotyledons</taxon>
        <taxon>Gunneridae</taxon>
        <taxon>Pentapetalae</taxon>
        <taxon>rosids</taxon>
        <taxon>malvids</taxon>
        <taxon>Brassicales</taxon>
        <taxon>Brassicaceae</taxon>
        <taxon>Camelineae</taxon>
        <taxon>Arabidopsis</taxon>
    </lineage>
</organism>
<gene>
    <name evidence="3" type="primary">STKL1</name>
    <name evidence="5" type="ordered locus">At4g00238</name>
    <name evidence="7" type="ORF">F5I10</name>
</gene>
<feature type="chain" id="PRO_0000436987" description="Transcription factor STKL1">
    <location>
        <begin position="1"/>
        <end position="345"/>
    </location>
</feature>
<feature type="region of interest" description="Disordered" evidence="1">
    <location>
        <begin position="1"/>
        <end position="145"/>
    </location>
</feature>
<feature type="compositionally biased region" description="Low complexity" evidence="1">
    <location>
        <begin position="11"/>
        <end position="22"/>
    </location>
</feature>
<feature type="compositionally biased region" description="Basic and acidic residues" evidence="1">
    <location>
        <begin position="23"/>
        <end position="32"/>
    </location>
</feature>
<feature type="compositionally biased region" description="Polar residues" evidence="1">
    <location>
        <begin position="37"/>
        <end position="46"/>
    </location>
</feature>
<feature type="compositionally biased region" description="Basic and acidic residues" evidence="1">
    <location>
        <begin position="114"/>
        <end position="137"/>
    </location>
</feature>
<feature type="modified residue" description="Phosphoserine" evidence="8">
    <location>
        <position position="105"/>
    </location>
</feature>
<dbReference type="EMBL" id="AF195115">
    <property type="status" value="NOT_ANNOTATED_CDS"/>
    <property type="molecule type" value="Genomic_DNA"/>
</dbReference>
<dbReference type="EMBL" id="CP002687">
    <property type="protein sequence ID" value="AEE81844.1"/>
    <property type="molecule type" value="Genomic_DNA"/>
</dbReference>
<dbReference type="EMBL" id="AK118935">
    <property type="protein sequence ID" value="BAC43516.1"/>
    <property type="molecule type" value="mRNA"/>
</dbReference>
<dbReference type="EMBL" id="BT005630">
    <property type="protein sequence ID" value="AAO64050.1"/>
    <property type="molecule type" value="mRNA"/>
</dbReference>
<dbReference type="EMBL" id="AY084536">
    <property type="protein sequence ID" value="AAM61104.1"/>
    <property type="molecule type" value="mRNA"/>
</dbReference>
<dbReference type="RefSeq" id="NP_567159.1">
    <property type="nucleotide sequence ID" value="NM_116244.3"/>
</dbReference>
<dbReference type="SMR" id="Q8LG05"/>
<dbReference type="FunCoup" id="Q8LG05">
    <property type="interactions" value="293"/>
</dbReference>
<dbReference type="IntAct" id="Q8LG05">
    <property type="interactions" value="9"/>
</dbReference>
<dbReference type="STRING" id="3702.Q8LG05"/>
<dbReference type="iPTMnet" id="Q8LG05"/>
<dbReference type="PaxDb" id="3702-AT4G00238.1"/>
<dbReference type="ProteomicsDB" id="228419"/>
<dbReference type="EnsemblPlants" id="AT4G00238.1">
    <property type="protein sequence ID" value="AT4G00238.1"/>
    <property type="gene ID" value="AT4G00238"/>
</dbReference>
<dbReference type="GeneID" id="825892"/>
<dbReference type="Gramene" id="AT4G00238.1">
    <property type="protein sequence ID" value="AT4G00238.1"/>
    <property type="gene ID" value="AT4G00238"/>
</dbReference>
<dbReference type="KEGG" id="ath:AT4G00238"/>
<dbReference type="Araport" id="AT4G00238"/>
<dbReference type="TAIR" id="AT4G00238">
    <property type="gene designation" value="ATSTKL1"/>
</dbReference>
<dbReference type="HOGENOM" id="CLU_051273_0_0_1"/>
<dbReference type="InParanoid" id="Q8LG05"/>
<dbReference type="OMA" id="DSEWSNW"/>
<dbReference type="PhylomeDB" id="Q8LG05"/>
<dbReference type="CD-CODE" id="4299E36E">
    <property type="entry name" value="Nucleolus"/>
</dbReference>
<dbReference type="PRO" id="PR:Q8LG05"/>
<dbReference type="Proteomes" id="UP000006548">
    <property type="component" value="Chromosome 4"/>
</dbReference>
<dbReference type="ExpressionAtlas" id="Q8LG05">
    <property type="expression patterns" value="baseline and differential"/>
</dbReference>
<dbReference type="GO" id="GO:0005730">
    <property type="term" value="C:nucleolus"/>
    <property type="evidence" value="ECO:0007005"/>
    <property type="project" value="TAIR"/>
</dbReference>
<dbReference type="GO" id="GO:0000976">
    <property type="term" value="F:transcription cis-regulatory region binding"/>
    <property type="evidence" value="ECO:0000314"/>
    <property type="project" value="TAIR"/>
</dbReference>
<dbReference type="GO" id="GO:0071333">
    <property type="term" value="P:cellular response to glucose stimulus"/>
    <property type="evidence" value="ECO:0000315"/>
    <property type="project" value="TAIR"/>
</dbReference>
<dbReference type="GO" id="GO:0010629">
    <property type="term" value="P:negative regulation of gene expression"/>
    <property type="evidence" value="ECO:0000315"/>
    <property type="project" value="TAIR"/>
</dbReference>
<dbReference type="GO" id="GO:0006355">
    <property type="term" value="P:regulation of DNA-templated transcription"/>
    <property type="evidence" value="ECO:0007669"/>
    <property type="project" value="InterPro"/>
</dbReference>
<dbReference type="InterPro" id="IPR007592">
    <property type="entry name" value="GEBP"/>
</dbReference>
<dbReference type="InterPro" id="IPR053933">
    <property type="entry name" value="GeBP-like_C"/>
</dbReference>
<dbReference type="InterPro" id="IPR053932">
    <property type="entry name" value="GeBP-like_DBD"/>
</dbReference>
<dbReference type="PANTHER" id="PTHR31662">
    <property type="entry name" value="BNAANNG10740D PROTEIN-RELATED"/>
    <property type="match status" value="1"/>
</dbReference>
<dbReference type="PANTHER" id="PTHR31662:SF68">
    <property type="entry name" value="DNA-BINDING STOREKEEPER PROTEIN TRANSCRIPTIONAL REGULATOR-LIKE PROTEIN-RELATED"/>
    <property type="match status" value="1"/>
</dbReference>
<dbReference type="Pfam" id="PF22757">
    <property type="entry name" value="GeBP-like_C"/>
    <property type="match status" value="1"/>
</dbReference>
<dbReference type="Pfam" id="PF04504">
    <property type="entry name" value="GeBP-like_DBD"/>
    <property type="match status" value="1"/>
</dbReference>
<sequence>MASLENPAIDSSSEFESSSEEISSSKESKPKEAPVTVPSTKTLNSPSAAVAVSDDSESEKQSFVLTRRKKKEGAAESPAVKSGKKEGAAESPAVKSGNNEGATESPAVKSGKKRASEGTTSRDMHVKRIKKEGDNKKGHAQRVWSEEDEISLLQAMIDFKAETGTSPWDHKDRFFDIAKKSISFDVSKVQFFDKIRSFKRKYFGDRKVRSVESDHDKKCLGLAVSFWGSDGVSLETPVKKKVKDESVLVKANSKEKNVKPLVKEDEQVVILGEDSEWFEESFLVPVIASLGLDEYSVKKKWSKVSVETKKRIQEKMKLVDAKKCELLLANMDVLKEVTSVLTQTN</sequence>
<name>STKLM_ARATH</name>
<comment type="function">
    <text evidence="2">Transcription repressor that binds DNA in a sequence-specific manner, 5'-GCCT-3', to regulate the expression of PGR. Acts as a modulatory component for the glucose-triggered developmental leaf growth process.</text>
</comment>
<comment type="interaction">
    <interactant intactId="EBI-4424255">
        <id>Q8LG05</id>
    </interactant>
    <interactant intactId="EBI-15194473">
        <id>Q9LPF0</id>
        <label>At1g44810</label>
    </interactant>
    <organismsDiffer>false</organismsDiffer>
    <experiments>3</experiments>
</comment>
<comment type="interaction">
    <interactant intactId="EBI-4424255">
        <id>Q8LG05</id>
    </interactant>
    <interactant intactId="EBI-15192745">
        <id>Q9LST3</id>
        <label>At5g60142</label>
    </interactant>
    <organismsDiffer>false</organismsDiffer>
    <experiments>3</experiments>
</comment>
<comment type="interaction">
    <interactant intactId="EBI-4424255">
        <id>Q8LG05</id>
    </interactant>
    <interactant intactId="EBI-15191543">
        <id>Q05153</id>
        <label>SSRP1</label>
    </interactant>
    <organismsDiffer>false</organismsDiffer>
    <experiments>3</experiments>
</comment>
<comment type="subcellular location">
    <subcellularLocation>
        <location evidence="2">Nucleus</location>
    </subcellularLocation>
</comment>
<comment type="tissue specificity">
    <text evidence="2">Expressed strongly in leaves and flowers, weakly in roots, and very weakly in stems.</text>
</comment>
<comment type="induction">
    <text evidence="2">Up-regulated upon glucose treatment.</text>
</comment>
<comment type="similarity">
    <text evidence="4">Belongs to the GeBP family.</text>
</comment>
<comment type="online information" name="Plant Transcription Factor Database">
    <link uri="https://planttfdb.gao-lab.org/family.php?fam=GeBP#family_intro"/>
</comment>
<reference key="1">
    <citation type="journal article" date="1999" name="Nature">
        <title>Sequence and analysis of chromosome 4 of the plant Arabidopsis thaliana.</title>
        <authorList>
            <person name="Mayer K.F.X."/>
            <person name="Schueller C."/>
            <person name="Wambutt R."/>
            <person name="Murphy G."/>
            <person name="Volckaert G."/>
            <person name="Pohl T."/>
            <person name="Duesterhoeft A."/>
            <person name="Stiekema W."/>
            <person name="Entian K.-D."/>
            <person name="Terryn N."/>
            <person name="Harris B."/>
            <person name="Ansorge W."/>
            <person name="Brandt P."/>
            <person name="Grivell L.A."/>
            <person name="Rieger M."/>
            <person name="Weichselgartner M."/>
            <person name="de Simone V."/>
            <person name="Obermaier B."/>
            <person name="Mache R."/>
            <person name="Mueller M."/>
            <person name="Kreis M."/>
            <person name="Delseny M."/>
            <person name="Puigdomenech P."/>
            <person name="Watson M."/>
            <person name="Schmidtheini T."/>
            <person name="Reichert B."/>
            <person name="Portetelle D."/>
            <person name="Perez-Alonso M."/>
            <person name="Boutry M."/>
            <person name="Bancroft I."/>
            <person name="Vos P."/>
            <person name="Hoheisel J."/>
            <person name="Zimmermann W."/>
            <person name="Wedler H."/>
            <person name="Ridley P."/>
            <person name="Langham S.-A."/>
            <person name="McCullagh B."/>
            <person name="Bilham L."/>
            <person name="Robben J."/>
            <person name="van der Schueren J."/>
            <person name="Grymonprez B."/>
            <person name="Chuang Y.-J."/>
            <person name="Vandenbussche F."/>
            <person name="Braeken M."/>
            <person name="Weltjens I."/>
            <person name="Voet M."/>
            <person name="Bastiaens I."/>
            <person name="Aert R."/>
            <person name="Defoor E."/>
            <person name="Weitzenegger T."/>
            <person name="Bothe G."/>
            <person name="Ramsperger U."/>
            <person name="Hilbert H."/>
            <person name="Braun M."/>
            <person name="Holzer E."/>
            <person name="Brandt A."/>
            <person name="Peters S."/>
            <person name="van Staveren M."/>
            <person name="Dirkse W."/>
            <person name="Mooijman P."/>
            <person name="Klein Lankhorst R."/>
            <person name="Rose M."/>
            <person name="Hauf J."/>
            <person name="Koetter P."/>
            <person name="Berneiser S."/>
            <person name="Hempel S."/>
            <person name="Feldpausch M."/>
            <person name="Lamberth S."/>
            <person name="Van den Daele H."/>
            <person name="De Keyser A."/>
            <person name="Buysshaert C."/>
            <person name="Gielen J."/>
            <person name="Villarroel R."/>
            <person name="De Clercq R."/>
            <person name="van Montagu M."/>
            <person name="Rogers J."/>
            <person name="Cronin A."/>
            <person name="Quail M.A."/>
            <person name="Bray-Allen S."/>
            <person name="Clark L."/>
            <person name="Doggett J."/>
            <person name="Hall S."/>
            <person name="Kay M."/>
            <person name="Lennard N."/>
            <person name="McLay K."/>
            <person name="Mayes R."/>
            <person name="Pettett A."/>
            <person name="Rajandream M.A."/>
            <person name="Lyne M."/>
            <person name="Benes V."/>
            <person name="Rechmann S."/>
            <person name="Borkova D."/>
            <person name="Bloecker H."/>
            <person name="Scharfe M."/>
            <person name="Grimm M."/>
            <person name="Loehnert T.-H."/>
            <person name="Dose S."/>
            <person name="de Haan M."/>
            <person name="Maarse A.C."/>
            <person name="Schaefer M."/>
            <person name="Mueller-Auer S."/>
            <person name="Gabel C."/>
            <person name="Fuchs M."/>
            <person name="Fartmann B."/>
            <person name="Granderath K."/>
            <person name="Dauner D."/>
            <person name="Herzl A."/>
            <person name="Neumann S."/>
            <person name="Argiriou A."/>
            <person name="Vitale D."/>
            <person name="Liguori R."/>
            <person name="Piravandi E."/>
            <person name="Massenet O."/>
            <person name="Quigley F."/>
            <person name="Clabauld G."/>
            <person name="Muendlein A."/>
            <person name="Felber R."/>
            <person name="Schnabl S."/>
            <person name="Hiller R."/>
            <person name="Schmidt W."/>
            <person name="Lecharny A."/>
            <person name="Aubourg S."/>
            <person name="Chefdor F."/>
            <person name="Cooke R."/>
            <person name="Berger C."/>
            <person name="Monfort A."/>
            <person name="Casacuberta E."/>
            <person name="Gibbons T."/>
            <person name="Weber N."/>
            <person name="Vandenbol M."/>
            <person name="Bargues M."/>
            <person name="Terol J."/>
            <person name="Torres A."/>
            <person name="Perez-Perez A."/>
            <person name="Purnelle B."/>
            <person name="Bent E."/>
            <person name="Johnson S."/>
            <person name="Tacon D."/>
            <person name="Jesse T."/>
            <person name="Heijnen L."/>
            <person name="Schwarz S."/>
            <person name="Scholler P."/>
            <person name="Heber S."/>
            <person name="Francs P."/>
            <person name="Bielke C."/>
            <person name="Frishman D."/>
            <person name="Haase D."/>
            <person name="Lemcke K."/>
            <person name="Mewes H.-W."/>
            <person name="Stocker S."/>
            <person name="Zaccaria P."/>
            <person name="Bevan M."/>
            <person name="Wilson R.K."/>
            <person name="de la Bastide M."/>
            <person name="Habermann K."/>
            <person name="Parnell L."/>
            <person name="Dedhia N."/>
            <person name="Gnoj L."/>
            <person name="Schutz K."/>
            <person name="Huang E."/>
            <person name="Spiegel L."/>
            <person name="Sekhon M."/>
            <person name="Murray J."/>
            <person name="Sheet P."/>
            <person name="Cordes M."/>
            <person name="Abu-Threideh J."/>
            <person name="Stoneking T."/>
            <person name="Kalicki J."/>
            <person name="Graves T."/>
            <person name="Harmon G."/>
            <person name="Edwards J."/>
            <person name="Latreille P."/>
            <person name="Courtney L."/>
            <person name="Cloud J."/>
            <person name="Abbott A."/>
            <person name="Scott K."/>
            <person name="Johnson D."/>
            <person name="Minx P."/>
            <person name="Bentley D."/>
            <person name="Fulton B."/>
            <person name="Miller N."/>
            <person name="Greco T."/>
            <person name="Kemp K."/>
            <person name="Kramer J."/>
            <person name="Fulton L."/>
            <person name="Mardis E."/>
            <person name="Dante M."/>
            <person name="Pepin K."/>
            <person name="Hillier L.W."/>
            <person name="Nelson J."/>
            <person name="Spieth J."/>
            <person name="Ryan E."/>
            <person name="Andrews S."/>
            <person name="Geisel C."/>
            <person name="Layman D."/>
            <person name="Du H."/>
            <person name="Ali J."/>
            <person name="Berghoff A."/>
            <person name="Jones K."/>
            <person name="Drone K."/>
            <person name="Cotton M."/>
            <person name="Joshu C."/>
            <person name="Antonoiu B."/>
            <person name="Zidanic M."/>
            <person name="Strong C."/>
            <person name="Sun H."/>
            <person name="Lamar B."/>
            <person name="Yordan C."/>
            <person name="Ma P."/>
            <person name="Zhong J."/>
            <person name="Preston R."/>
            <person name="Vil D."/>
            <person name="Shekher M."/>
            <person name="Matero A."/>
            <person name="Shah R."/>
            <person name="Swaby I.K."/>
            <person name="O'Shaughnessy A."/>
            <person name="Rodriguez M."/>
            <person name="Hoffman J."/>
            <person name="Till S."/>
            <person name="Granat S."/>
            <person name="Shohdy N."/>
            <person name="Hasegawa A."/>
            <person name="Hameed A."/>
            <person name="Lodhi M."/>
            <person name="Johnson A."/>
            <person name="Chen E."/>
            <person name="Marra M.A."/>
            <person name="Martienssen R."/>
            <person name="McCombie W.R."/>
        </authorList>
    </citation>
    <scope>NUCLEOTIDE SEQUENCE [LARGE SCALE GENOMIC DNA]</scope>
    <source>
        <strain>cv. Columbia</strain>
    </source>
</reference>
<reference key="2">
    <citation type="journal article" date="2017" name="Plant J.">
        <title>Araport11: a complete reannotation of the Arabidopsis thaliana reference genome.</title>
        <authorList>
            <person name="Cheng C.Y."/>
            <person name="Krishnakumar V."/>
            <person name="Chan A.P."/>
            <person name="Thibaud-Nissen F."/>
            <person name="Schobel S."/>
            <person name="Town C.D."/>
        </authorList>
    </citation>
    <scope>GENOME REANNOTATION</scope>
    <source>
        <strain>cv. Columbia</strain>
    </source>
</reference>
<reference key="3">
    <citation type="journal article" date="2002" name="Science">
        <title>Functional annotation of a full-length Arabidopsis cDNA collection.</title>
        <authorList>
            <person name="Seki M."/>
            <person name="Narusaka M."/>
            <person name="Kamiya A."/>
            <person name="Ishida J."/>
            <person name="Satou M."/>
            <person name="Sakurai T."/>
            <person name="Nakajima M."/>
            <person name="Enju A."/>
            <person name="Akiyama K."/>
            <person name="Oono Y."/>
            <person name="Muramatsu M."/>
            <person name="Hayashizaki Y."/>
            <person name="Kawai J."/>
            <person name="Carninci P."/>
            <person name="Itoh M."/>
            <person name="Ishii Y."/>
            <person name="Arakawa T."/>
            <person name="Shibata K."/>
            <person name="Shinagawa A."/>
            <person name="Shinozaki K."/>
        </authorList>
    </citation>
    <scope>NUCLEOTIDE SEQUENCE [LARGE SCALE MRNA]</scope>
    <source>
        <strain>cv. Columbia</strain>
    </source>
</reference>
<reference key="4">
    <citation type="journal article" date="2003" name="Science">
        <title>Empirical analysis of transcriptional activity in the Arabidopsis genome.</title>
        <authorList>
            <person name="Yamada K."/>
            <person name="Lim J."/>
            <person name="Dale J.M."/>
            <person name="Chen H."/>
            <person name="Shinn P."/>
            <person name="Palm C.J."/>
            <person name="Southwick A.M."/>
            <person name="Wu H.C."/>
            <person name="Kim C.J."/>
            <person name="Nguyen M."/>
            <person name="Pham P.K."/>
            <person name="Cheuk R.F."/>
            <person name="Karlin-Newmann G."/>
            <person name="Liu S.X."/>
            <person name="Lam B."/>
            <person name="Sakano H."/>
            <person name="Wu T."/>
            <person name="Yu G."/>
            <person name="Miranda M."/>
            <person name="Quach H.L."/>
            <person name="Tripp M."/>
            <person name="Chang C.H."/>
            <person name="Lee J.M."/>
            <person name="Toriumi M.J."/>
            <person name="Chan M.M."/>
            <person name="Tang C.C."/>
            <person name="Onodera C.S."/>
            <person name="Deng J.M."/>
            <person name="Akiyama K."/>
            <person name="Ansari Y."/>
            <person name="Arakawa T."/>
            <person name="Banh J."/>
            <person name="Banno F."/>
            <person name="Bowser L."/>
            <person name="Brooks S.Y."/>
            <person name="Carninci P."/>
            <person name="Chao Q."/>
            <person name="Choy N."/>
            <person name="Enju A."/>
            <person name="Goldsmith A.D."/>
            <person name="Gurjal M."/>
            <person name="Hansen N.F."/>
            <person name="Hayashizaki Y."/>
            <person name="Johnson-Hopson C."/>
            <person name="Hsuan V.W."/>
            <person name="Iida K."/>
            <person name="Karnes M."/>
            <person name="Khan S."/>
            <person name="Koesema E."/>
            <person name="Ishida J."/>
            <person name="Jiang P.X."/>
            <person name="Jones T."/>
            <person name="Kawai J."/>
            <person name="Kamiya A."/>
            <person name="Meyers C."/>
            <person name="Nakajima M."/>
            <person name="Narusaka M."/>
            <person name="Seki M."/>
            <person name="Sakurai T."/>
            <person name="Satou M."/>
            <person name="Tamse R."/>
            <person name="Vaysberg M."/>
            <person name="Wallender E.K."/>
            <person name="Wong C."/>
            <person name="Yamamura Y."/>
            <person name="Yuan S."/>
            <person name="Shinozaki K."/>
            <person name="Davis R.W."/>
            <person name="Theologis A."/>
            <person name="Ecker J.R."/>
        </authorList>
    </citation>
    <scope>NUCLEOTIDE SEQUENCE [LARGE SCALE MRNA]</scope>
    <source>
        <strain>cv. Columbia</strain>
    </source>
</reference>
<reference key="5">
    <citation type="submission" date="2002-03" db="EMBL/GenBank/DDBJ databases">
        <title>Full-length cDNA from Arabidopsis thaliana.</title>
        <authorList>
            <person name="Brover V.V."/>
            <person name="Troukhan M.E."/>
            <person name="Alexandrov N.A."/>
            <person name="Lu Y.-P."/>
            <person name="Flavell R.B."/>
            <person name="Feldmann K.A."/>
        </authorList>
    </citation>
    <scope>NUCLEOTIDE SEQUENCE [LARGE SCALE MRNA]</scope>
</reference>
<reference key="6">
    <citation type="journal article" date="2009" name="Plant Physiol.">
        <title>Large-scale Arabidopsis phosphoproteome profiling reveals novel chloroplast kinase substrates and phosphorylation networks.</title>
        <authorList>
            <person name="Reiland S."/>
            <person name="Messerli G."/>
            <person name="Baerenfaller K."/>
            <person name="Gerrits B."/>
            <person name="Endler A."/>
            <person name="Grossmann J."/>
            <person name="Gruissem W."/>
            <person name="Baginsky S."/>
        </authorList>
    </citation>
    <scope>PHOSPHORYLATION [LARGE SCALE ANALYSIS] AT SER-105</scope>
    <scope>IDENTIFICATION BY MASS SPECTROMETRY [LARGE SCALE ANALYSIS]</scope>
</reference>
<reference key="7">
    <citation type="journal article" date="2016" name="Plant Physiol. Biochem.">
        <title>Regulation of Arabidopsis thaliana plasma membrane glucose-responsive regulator (AtPGR) expression by A. thaliana storekeeper-like transcription factor, AtSTKL, modulates glucose response in Arabidopsis.</title>
        <authorList>
            <person name="Chung M.S."/>
            <person name="Lee S."/>
            <person name="Min J.H."/>
            <person name="Huang P."/>
            <person name="Ju H.W."/>
            <person name="Kim C.S."/>
        </authorList>
    </citation>
    <scope>FUNCTION</scope>
    <scope>SUBCELLULAR LOCATION</scope>
    <scope>TISSUE SPECIFICITY</scope>
    <scope>INDUCTION BY GLUCOSE</scope>
    <scope>GENE FAMILY</scope>
</reference>
<proteinExistence type="evidence at protein level"/>
<keyword id="KW-0238">DNA-binding</keyword>
<keyword id="KW-0539">Nucleus</keyword>
<keyword id="KW-0597">Phosphoprotein</keyword>
<keyword id="KW-1185">Reference proteome</keyword>
<keyword id="KW-0678">Repressor</keyword>
<keyword id="KW-0804">Transcription</keyword>
<keyword id="KW-0805">Transcription regulation</keyword>
<evidence type="ECO:0000256" key="1">
    <source>
        <dbReference type="SAM" id="MobiDB-lite"/>
    </source>
</evidence>
<evidence type="ECO:0000269" key="2">
    <source>
    </source>
</evidence>
<evidence type="ECO:0000303" key="3">
    <source>
    </source>
</evidence>
<evidence type="ECO:0000305" key="4"/>
<evidence type="ECO:0000312" key="5">
    <source>
        <dbReference type="Araport" id="AT4G00238"/>
    </source>
</evidence>
<evidence type="ECO:0000312" key="6">
    <source>
        <dbReference type="EMBL" id="AAM61104.1"/>
    </source>
</evidence>
<evidence type="ECO:0000312" key="7">
    <source>
        <dbReference type="EMBL" id="AF195115"/>
    </source>
</evidence>
<evidence type="ECO:0007744" key="8">
    <source>
    </source>
</evidence>